<keyword id="KW-0521">NADP</keyword>
<keyword id="KW-0560">Oxidoreductase</keyword>
<gene>
    <name evidence="1" type="primary">guaC</name>
    <name type="ordered locus">SPs0992</name>
</gene>
<organism>
    <name type="scientific">Streptococcus pyogenes serotype M3 (strain SSI-1)</name>
    <dbReference type="NCBI Taxonomy" id="193567"/>
    <lineage>
        <taxon>Bacteria</taxon>
        <taxon>Bacillati</taxon>
        <taxon>Bacillota</taxon>
        <taxon>Bacilli</taxon>
        <taxon>Lactobacillales</taxon>
        <taxon>Streptococcaceae</taxon>
        <taxon>Streptococcus</taxon>
    </lineage>
</organism>
<dbReference type="EC" id="1.7.1.7" evidence="1"/>
<dbReference type="EMBL" id="BA000034">
    <property type="protein sequence ID" value="BAC64087.1"/>
    <property type="molecule type" value="Genomic_DNA"/>
</dbReference>
<dbReference type="RefSeq" id="WP_011054482.1">
    <property type="nucleotide sequence ID" value="NC_004606.1"/>
</dbReference>
<dbReference type="SMR" id="P0DB91"/>
<dbReference type="GeneID" id="69900878"/>
<dbReference type="KEGG" id="sps:SPs0992"/>
<dbReference type="HOGENOM" id="CLU_022552_5_0_9"/>
<dbReference type="GO" id="GO:0005829">
    <property type="term" value="C:cytosol"/>
    <property type="evidence" value="ECO:0007669"/>
    <property type="project" value="TreeGrafter"/>
</dbReference>
<dbReference type="GO" id="GO:1902560">
    <property type="term" value="C:GMP reductase complex"/>
    <property type="evidence" value="ECO:0007669"/>
    <property type="project" value="InterPro"/>
</dbReference>
<dbReference type="GO" id="GO:0003920">
    <property type="term" value="F:GMP reductase activity"/>
    <property type="evidence" value="ECO:0007669"/>
    <property type="project" value="UniProtKB-UniRule"/>
</dbReference>
<dbReference type="GO" id="GO:0006163">
    <property type="term" value="P:purine nucleotide metabolic process"/>
    <property type="evidence" value="ECO:0007669"/>
    <property type="project" value="UniProtKB-UniRule"/>
</dbReference>
<dbReference type="CDD" id="cd00381">
    <property type="entry name" value="IMPDH"/>
    <property type="match status" value="1"/>
</dbReference>
<dbReference type="FunFam" id="3.20.20.70:FF:000424">
    <property type="entry name" value="Inosine-5'-monophosphate dehydrogenase 2"/>
    <property type="match status" value="1"/>
</dbReference>
<dbReference type="Gene3D" id="3.20.20.70">
    <property type="entry name" value="Aldolase class I"/>
    <property type="match status" value="1"/>
</dbReference>
<dbReference type="HAMAP" id="MF_01511">
    <property type="entry name" value="GMP_reduct_type2"/>
    <property type="match status" value="1"/>
</dbReference>
<dbReference type="InterPro" id="IPR013785">
    <property type="entry name" value="Aldolase_TIM"/>
</dbReference>
<dbReference type="InterPro" id="IPR050139">
    <property type="entry name" value="GMP_reductase"/>
</dbReference>
<dbReference type="InterPro" id="IPR005994">
    <property type="entry name" value="GuaC_type_2"/>
</dbReference>
<dbReference type="InterPro" id="IPR015875">
    <property type="entry name" value="IMP_DH/GMP_Rdtase_CS"/>
</dbReference>
<dbReference type="InterPro" id="IPR001093">
    <property type="entry name" value="IMP_DH_GMPRt"/>
</dbReference>
<dbReference type="NCBIfam" id="TIGR01306">
    <property type="entry name" value="GMP_reduct_2"/>
    <property type="match status" value="1"/>
</dbReference>
<dbReference type="NCBIfam" id="NF003966">
    <property type="entry name" value="PRK05458.1"/>
    <property type="match status" value="1"/>
</dbReference>
<dbReference type="PANTHER" id="PTHR43170">
    <property type="entry name" value="GMP REDUCTASE"/>
    <property type="match status" value="1"/>
</dbReference>
<dbReference type="PANTHER" id="PTHR43170:SF5">
    <property type="entry name" value="GMP REDUCTASE"/>
    <property type="match status" value="1"/>
</dbReference>
<dbReference type="Pfam" id="PF00478">
    <property type="entry name" value="IMPDH"/>
    <property type="match status" value="1"/>
</dbReference>
<dbReference type="PIRSF" id="PIRSF036500">
    <property type="entry name" value="GMP_red_Firmic"/>
    <property type="match status" value="1"/>
</dbReference>
<dbReference type="SMART" id="SM01240">
    <property type="entry name" value="IMPDH"/>
    <property type="match status" value="1"/>
</dbReference>
<dbReference type="SUPFAM" id="SSF51412">
    <property type="entry name" value="Inosine monophosphate dehydrogenase (IMPDH)"/>
    <property type="match status" value="1"/>
</dbReference>
<dbReference type="PROSITE" id="PS00487">
    <property type="entry name" value="IMP_DH_GMP_RED"/>
    <property type="match status" value="1"/>
</dbReference>
<protein>
    <recommendedName>
        <fullName evidence="1">GMP reductase</fullName>
        <ecNumber evidence="1">1.7.1.7</ecNumber>
    </recommendedName>
    <alternativeName>
        <fullName evidence="1">Guanosine 5'-monophosphate oxidoreductase</fullName>
        <shortName evidence="1">Guanosine monophosphate reductase</shortName>
    </alternativeName>
</protein>
<evidence type="ECO:0000255" key="1">
    <source>
        <dbReference type="HAMAP-Rule" id="MF_01511"/>
    </source>
</evidence>
<comment type="function">
    <text evidence="1">Catalyzes the irreversible NADPH-dependent deamination of GMP to IMP. It functions in the conversion of nucleobase, nucleoside and nucleotide derivatives of G to A nucleotides, and in maintaining the intracellular balance of A and G nucleotides.</text>
</comment>
<comment type="catalytic activity">
    <reaction evidence="1">
        <text>IMP + NH4(+) + NADP(+) = GMP + NADPH + 2 H(+)</text>
        <dbReference type="Rhea" id="RHEA:17185"/>
        <dbReference type="ChEBI" id="CHEBI:15378"/>
        <dbReference type="ChEBI" id="CHEBI:28938"/>
        <dbReference type="ChEBI" id="CHEBI:57783"/>
        <dbReference type="ChEBI" id="CHEBI:58053"/>
        <dbReference type="ChEBI" id="CHEBI:58115"/>
        <dbReference type="ChEBI" id="CHEBI:58349"/>
        <dbReference type="EC" id="1.7.1.7"/>
    </reaction>
</comment>
<comment type="similarity">
    <text evidence="1">Belongs to the IMPDH/GMPR family. GuaC type 2 subfamily.</text>
</comment>
<reference key="1">
    <citation type="journal article" date="2003" name="Genome Res.">
        <title>Genome sequence of an M3 strain of Streptococcus pyogenes reveals a large-scale genomic rearrangement in invasive strains and new insights into phage evolution.</title>
        <authorList>
            <person name="Nakagawa I."/>
            <person name="Kurokawa K."/>
            <person name="Yamashita A."/>
            <person name="Nakata M."/>
            <person name="Tomiyasu Y."/>
            <person name="Okahashi N."/>
            <person name="Kawabata S."/>
            <person name="Yamazaki K."/>
            <person name="Shiba T."/>
            <person name="Yasunaga T."/>
            <person name="Hayashi H."/>
            <person name="Hattori M."/>
            <person name="Hamada S."/>
        </authorList>
    </citation>
    <scope>NUCLEOTIDE SEQUENCE [LARGE SCALE GENOMIC DNA]</scope>
    <source>
        <strain>SSI-1</strain>
    </source>
</reference>
<proteinExistence type="inferred from homology"/>
<sequence length="327" mass="35929">MFNDIPVFDYEDIQLIPNKCIITSRSQADTSVTLGKYQFKLPVIPANMQTIIDETIAEQLAKEGYFYIMHRFDEDSRKPFIKRMHEQGLIASISVGVKACEYEFVTSLKEDAPEFITIDIAHGHANSVIDMIKHIKTELPETFVIAGNVGTPEAVRELENAGADATKVGIGPGKVCITKVKTGFGTGGWQLAALRWCAKAARKPIIADGGIRTHGDIAKSIRFGASMVMIGSLFAGHIESPGKTVEVDGETFKEYYGSASEYQKGEHKNVEGKKILLPTKGHLSDTLTEMQQDLQSSISYAGGKDLDSLRHVDYVIVKNSIWNGDSI</sequence>
<accession>P0DB91</accession>
<accession>Q8K7I6</accession>
<feature type="chain" id="PRO_0000411383" description="GMP reductase">
    <location>
        <begin position="1"/>
        <end position="327"/>
    </location>
</feature>
<feature type="active site" description="Thioimidate intermediate" evidence="1">
    <location>
        <position position="176"/>
    </location>
</feature>
<feature type="binding site" evidence="1">
    <location>
        <begin position="205"/>
        <end position="228"/>
    </location>
    <ligand>
        <name>NADP(+)</name>
        <dbReference type="ChEBI" id="CHEBI:58349"/>
    </ligand>
</feature>
<name>GUAC_STRPQ</name>